<dbReference type="EMBL" id="AP006716">
    <property type="protein sequence ID" value="BAE05149.1"/>
    <property type="molecule type" value="Genomic_DNA"/>
</dbReference>
<dbReference type="RefSeq" id="WP_011276116.1">
    <property type="nucleotide sequence ID" value="NC_007168.1"/>
</dbReference>
<dbReference type="SMR" id="Q4L5C6"/>
<dbReference type="KEGG" id="sha:SH1840"/>
<dbReference type="eggNOG" id="COG4838">
    <property type="taxonomic scope" value="Bacteria"/>
</dbReference>
<dbReference type="HOGENOM" id="CLU_160493_1_0_9"/>
<dbReference type="OrthoDB" id="2135235at2"/>
<dbReference type="Proteomes" id="UP000000543">
    <property type="component" value="Chromosome"/>
</dbReference>
<dbReference type="Gene3D" id="1.10.287.750">
    <property type="entry name" value="SO2669-like"/>
    <property type="match status" value="1"/>
</dbReference>
<dbReference type="HAMAP" id="MF_01560">
    <property type="entry name" value="UPF0358"/>
    <property type="match status" value="1"/>
</dbReference>
<dbReference type="InterPro" id="IPR009983">
    <property type="entry name" value="UPF0358"/>
</dbReference>
<dbReference type="InterPro" id="IPR036270">
    <property type="entry name" value="UPF0358_sf"/>
</dbReference>
<dbReference type="NCBIfam" id="NF010187">
    <property type="entry name" value="PRK13666.1"/>
    <property type="match status" value="1"/>
</dbReference>
<dbReference type="Pfam" id="PF07408">
    <property type="entry name" value="DUF1507"/>
    <property type="match status" value="1"/>
</dbReference>
<dbReference type="SUPFAM" id="SSF140404">
    <property type="entry name" value="EF2458-like"/>
    <property type="match status" value="1"/>
</dbReference>
<comment type="similarity">
    <text evidence="1">Belongs to the UPF0358 family.</text>
</comment>
<protein>
    <recommendedName>
        <fullName evidence="1">UPF0358 protein SH1840</fullName>
    </recommendedName>
</protein>
<proteinExistence type="inferred from homology"/>
<sequence length="92" mass="10607">MPKQSKMSNVAYEQLNQDADRILHLIKVQMDNLTLPSCPLYEEVLDTQMFGLQKEVDFAVKLGLVDKEDGKNLMLRLEKELSKLHEAFTNVK</sequence>
<name>Y1840_STAHJ</name>
<evidence type="ECO:0000255" key="1">
    <source>
        <dbReference type="HAMAP-Rule" id="MF_01560"/>
    </source>
</evidence>
<gene>
    <name type="ordered locus">SH1840</name>
</gene>
<reference key="1">
    <citation type="journal article" date="2005" name="J. Bacteriol.">
        <title>Whole-genome sequencing of Staphylococcus haemolyticus uncovers the extreme plasticity of its genome and the evolution of human-colonizing staphylococcal species.</title>
        <authorList>
            <person name="Takeuchi F."/>
            <person name="Watanabe S."/>
            <person name="Baba T."/>
            <person name="Yuzawa H."/>
            <person name="Ito T."/>
            <person name="Morimoto Y."/>
            <person name="Kuroda M."/>
            <person name="Cui L."/>
            <person name="Takahashi M."/>
            <person name="Ankai A."/>
            <person name="Baba S."/>
            <person name="Fukui S."/>
            <person name="Lee J.C."/>
            <person name="Hiramatsu K."/>
        </authorList>
    </citation>
    <scope>NUCLEOTIDE SEQUENCE [LARGE SCALE GENOMIC DNA]</scope>
    <source>
        <strain>JCSC1435</strain>
    </source>
</reference>
<feature type="chain" id="PRO_0000110659" description="UPF0358 protein SH1840">
    <location>
        <begin position="1"/>
        <end position="92"/>
    </location>
</feature>
<accession>Q4L5C6</accession>
<organism>
    <name type="scientific">Staphylococcus haemolyticus (strain JCSC1435)</name>
    <dbReference type="NCBI Taxonomy" id="279808"/>
    <lineage>
        <taxon>Bacteria</taxon>
        <taxon>Bacillati</taxon>
        <taxon>Bacillota</taxon>
        <taxon>Bacilli</taxon>
        <taxon>Bacillales</taxon>
        <taxon>Staphylococcaceae</taxon>
        <taxon>Staphylococcus</taxon>
    </lineage>
</organism>